<reference key="1">
    <citation type="journal article" date="2006" name="Mol. Genet. Genomics">
        <title>The chloroplast genome of Nicotiana sylvestris and Nicotiana tomentosiformis: complete sequencing confirms that the Nicotiana sylvestris progenitor is the maternal genome donor of Nicotiana tabacum.</title>
        <authorList>
            <person name="Yukawa M."/>
            <person name="Tsudzuki T."/>
            <person name="Sugiura M."/>
        </authorList>
    </citation>
    <scope>NUCLEOTIDE SEQUENCE [LARGE SCALE GENOMIC DNA]</scope>
</reference>
<sequence length="37" mass="4474">MKIRASIRKICEKCRLIRRRGRIIVICSNPRHKQRQG</sequence>
<keyword id="KW-0150">Chloroplast</keyword>
<keyword id="KW-0934">Plastid</keyword>
<keyword id="KW-0687">Ribonucleoprotein</keyword>
<keyword id="KW-0689">Ribosomal protein</keyword>
<accession>Q33BZ8</accession>
<feature type="chain" id="PRO_0000276825" description="Large ribosomal subunit protein bL36c">
    <location>
        <begin position="1"/>
        <end position="37"/>
    </location>
</feature>
<gene>
    <name evidence="1" type="primary">rpl36</name>
</gene>
<proteinExistence type="inferred from homology"/>
<geneLocation type="chloroplast"/>
<comment type="subcellular location">
    <subcellularLocation>
        <location>Plastid</location>
        <location>Chloroplast</location>
    </subcellularLocation>
</comment>
<comment type="similarity">
    <text evidence="1">Belongs to the bacterial ribosomal protein bL36 family.</text>
</comment>
<evidence type="ECO:0000255" key="1">
    <source>
        <dbReference type="HAMAP-Rule" id="MF_00251"/>
    </source>
</evidence>
<evidence type="ECO:0000305" key="2"/>
<organism>
    <name type="scientific">Nicotiana tomentosiformis</name>
    <name type="common">Tobacco</name>
    <dbReference type="NCBI Taxonomy" id="4098"/>
    <lineage>
        <taxon>Eukaryota</taxon>
        <taxon>Viridiplantae</taxon>
        <taxon>Streptophyta</taxon>
        <taxon>Embryophyta</taxon>
        <taxon>Tracheophyta</taxon>
        <taxon>Spermatophyta</taxon>
        <taxon>Magnoliopsida</taxon>
        <taxon>eudicotyledons</taxon>
        <taxon>Gunneridae</taxon>
        <taxon>Pentapetalae</taxon>
        <taxon>asterids</taxon>
        <taxon>lamiids</taxon>
        <taxon>Solanales</taxon>
        <taxon>Solanaceae</taxon>
        <taxon>Nicotianoideae</taxon>
        <taxon>Nicotianeae</taxon>
        <taxon>Nicotiana</taxon>
    </lineage>
</organism>
<protein>
    <recommendedName>
        <fullName evidence="1">Large ribosomal subunit protein bL36c</fullName>
    </recommendedName>
    <alternativeName>
        <fullName evidence="2">50S ribosomal protein L36, chloroplastic</fullName>
    </alternativeName>
</protein>
<dbReference type="EMBL" id="AB240139">
    <property type="protein sequence ID" value="BAE48037.1"/>
    <property type="molecule type" value="Genomic_DNA"/>
</dbReference>
<dbReference type="RefSeq" id="YP_398898.1">
    <property type="nucleotide sequence ID" value="NC_007602.1"/>
</dbReference>
<dbReference type="SMR" id="Q33BZ8"/>
<dbReference type="GeneID" id="3776299"/>
<dbReference type="KEGG" id="nto:3776299"/>
<dbReference type="GO" id="GO:0009507">
    <property type="term" value="C:chloroplast"/>
    <property type="evidence" value="ECO:0007669"/>
    <property type="project" value="UniProtKB-SubCell"/>
</dbReference>
<dbReference type="GO" id="GO:1990904">
    <property type="term" value="C:ribonucleoprotein complex"/>
    <property type="evidence" value="ECO:0007669"/>
    <property type="project" value="UniProtKB-KW"/>
</dbReference>
<dbReference type="GO" id="GO:0005840">
    <property type="term" value="C:ribosome"/>
    <property type="evidence" value="ECO:0007669"/>
    <property type="project" value="UniProtKB-KW"/>
</dbReference>
<dbReference type="GO" id="GO:0003735">
    <property type="term" value="F:structural constituent of ribosome"/>
    <property type="evidence" value="ECO:0007669"/>
    <property type="project" value="InterPro"/>
</dbReference>
<dbReference type="GO" id="GO:0006412">
    <property type="term" value="P:translation"/>
    <property type="evidence" value="ECO:0007669"/>
    <property type="project" value="UniProtKB-UniRule"/>
</dbReference>
<dbReference type="HAMAP" id="MF_00251">
    <property type="entry name" value="Ribosomal_bL36"/>
    <property type="match status" value="1"/>
</dbReference>
<dbReference type="InterPro" id="IPR000473">
    <property type="entry name" value="Ribosomal_bL36"/>
</dbReference>
<dbReference type="InterPro" id="IPR035977">
    <property type="entry name" value="Ribosomal_bL36_sp"/>
</dbReference>
<dbReference type="NCBIfam" id="TIGR01022">
    <property type="entry name" value="rpmJ_bact"/>
    <property type="match status" value="1"/>
</dbReference>
<dbReference type="PANTHER" id="PTHR42888">
    <property type="entry name" value="50S RIBOSOMAL PROTEIN L36, CHLOROPLASTIC"/>
    <property type="match status" value="1"/>
</dbReference>
<dbReference type="PANTHER" id="PTHR42888:SF1">
    <property type="entry name" value="LARGE RIBOSOMAL SUBUNIT PROTEIN BL36C"/>
    <property type="match status" value="1"/>
</dbReference>
<dbReference type="Pfam" id="PF00444">
    <property type="entry name" value="Ribosomal_L36"/>
    <property type="match status" value="1"/>
</dbReference>
<dbReference type="SUPFAM" id="SSF57840">
    <property type="entry name" value="Ribosomal protein L36"/>
    <property type="match status" value="1"/>
</dbReference>
<dbReference type="PROSITE" id="PS00828">
    <property type="entry name" value="RIBOSOMAL_L36"/>
    <property type="match status" value="1"/>
</dbReference>
<name>RK36_NICTO</name>